<accession>B9KZW3</accession>
<evidence type="ECO:0000255" key="1">
    <source>
        <dbReference type="HAMAP-Rule" id="MF_01315"/>
    </source>
</evidence>
<evidence type="ECO:0000256" key="2">
    <source>
        <dbReference type="SAM" id="MobiDB-lite"/>
    </source>
</evidence>
<evidence type="ECO:0000305" key="3"/>
<protein>
    <recommendedName>
        <fullName evidence="1">Small ribosomal subunit protein uS13</fullName>
    </recommendedName>
    <alternativeName>
        <fullName evidence="3">30S ribosomal protein S13</fullName>
    </alternativeName>
</protein>
<organism>
    <name type="scientific">Thermomicrobium roseum (strain ATCC 27502 / DSM 5159 / P-2)</name>
    <dbReference type="NCBI Taxonomy" id="309801"/>
    <lineage>
        <taxon>Bacteria</taxon>
        <taxon>Pseudomonadati</taxon>
        <taxon>Thermomicrobiota</taxon>
        <taxon>Thermomicrobia</taxon>
        <taxon>Thermomicrobiales</taxon>
        <taxon>Thermomicrobiaceae</taxon>
        <taxon>Thermomicrobium</taxon>
    </lineage>
</organism>
<reference key="1">
    <citation type="journal article" date="2009" name="PLoS ONE">
        <title>Complete genome sequence of the aerobic CO-oxidizing thermophile Thermomicrobium roseum.</title>
        <authorList>
            <person name="Wu D."/>
            <person name="Raymond J."/>
            <person name="Wu M."/>
            <person name="Chatterji S."/>
            <person name="Ren Q."/>
            <person name="Graham J.E."/>
            <person name="Bryant D.A."/>
            <person name="Robb F."/>
            <person name="Colman A."/>
            <person name="Tallon L.J."/>
            <person name="Badger J.H."/>
            <person name="Madupu R."/>
            <person name="Ward N.L."/>
            <person name="Eisen J.A."/>
        </authorList>
    </citation>
    <scope>NUCLEOTIDE SEQUENCE [LARGE SCALE GENOMIC DNA]</scope>
    <source>
        <strain>ATCC 27502 / DSM 5159 / P-2</strain>
    </source>
</reference>
<proteinExistence type="inferred from homology"/>
<comment type="function">
    <text evidence="1">Located at the top of the head of the 30S subunit, it contacts several helices of the 16S rRNA. In the 70S ribosome it contacts the 23S rRNA (bridge B1a) and protein L5 of the 50S subunit (bridge B1b), connecting the 2 subunits; these bridges are implicated in subunit movement. Contacts the tRNAs in the A and P-sites.</text>
</comment>
<comment type="subunit">
    <text evidence="1">Part of the 30S ribosomal subunit. Forms a loose heterodimer with protein S19. Forms two bridges to the 50S subunit in the 70S ribosome.</text>
</comment>
<comment type="similarity">
    <text evidence="1">Belongs to the universal ribosomal protein uS13 family.</text>
</comment>
<feature type="chain" id="PRO_1000165645" description="Small ribosomal subunit protein uS13">
    <location>
        <begin position="1"/>
        <end position="128"/>
    </location>
</feature>
<feature type="region of interest" description="Disordered" evidence="2">
    <location>
        <begin position="98"/>
        <end position="128"/>
    </location>
</feature>
<feature type="compositionally biased region" description="Basic residues" evidence="2">
    <location>
        <begin position="101"/>
        <end position="128"/>
    </location>
</feature>
<name>RS13_THERP</name>
<keyword id="KW-1185">Reference proteome</keyword>
<keyword id="KW-0687">Ribonucleoprotein</keyword>
<keyword id="KW-0689">Ribosomal protein</keyword>
<keyword id="KW-0694">RNA-binding</keyword>
<keyword id="KW-0699">rRNA-binding</keyword>
<keyword id="KW-0820">tRNA-binding</keyword>
<gene>
    <name evidence="1" type="primary">rpsM</name>
    <name type="ordered locus">trd_0960</name>
</gene>
<sequence length="128" mass="14762">MARIAGVDLPRDKRIEYALTLIYGIGWTTARKILERTGIDPWTKVRDLTDDEVQRLRDIIEKEMVVEGDLRRQVAMNIKRLIDIGCYRGLRHRMGLPVRGQRTRTNARTRKGPRPRIGVKKKGKQAGS</sequence>
<dbReference type="EMBL" id="CP001275">
    <property type="protein sequence ID" value="ACM05584.1"/>
    <property type="molecule type" value="Genomic_DNA"/>
</dbReference>
<dbReference type="RefSeq" id="WP_015921924.1">
    <property type="nucleotide sequence ID" value="NC_011959.1"/>
</dbReference>
<dbReference type="SMR" id="B9KZW3"/>
<dbReference type="STRING" id="309801.trd_0960"/>
<dbReference type="KEGG" id="tro:trd_0960"/>
<dbReference type="eggNOG" id="COG0099">
    <property type="taxonomic scope" value="Bacteria"/>
</dbReference>
<dbReference type="HOGENOM" id="CLU_103849_1_2_0"/>
<dbReference type="OrthoDB" id="9803610at2"/>
<dbReference type="Proteomes" id="UP000000447">
    <property type="component" value="Chromosome"/>
</dbReference>
<dbReference type="GO" id="GO:0005829">
    <property type="term" value="C:cytosol"/>
    <property type="evidence" value="ECO:0007669"/>
    <property type="project" value="TreeGrafter"/>
</dbReference>
<dbReference type="GO" id="GO:0015935">
    <property type="term" value="C:small ribosomal subunit"/>
    <property type="evidence" value="ECO:0007669"/>
    <property type="project" value="TreeGrafter"/>
</dbReference>
<dbReference type="GO" id="GO:0019843">
    <property type="term" value="F:rRNA binding"/>
    <property type="evidence" value="ECO:0007669"/>
    <property type="project" value="UniProtKB-UniRule"/>
</dbReference>
<dbReference type="GO" id="GO:0003735">
    <property type="term" value="F:structural constituent of ribosome"/>
    <property type="evidence" value="ECO:0007669"/>
    <property type="project" value="InterPro"/>
</dbReference>
<dbReference type="GO" id="GO:0000049">
    <property type="term" value="F:tRNA binding"/>
    <property type="evidence" value="ECO:0007669"/>
    <property type="project" value="UniProtKB-UniRule"/>
</dbReference>
<dbReference type="GO" id="GO:0006412">
    <property type="term" value="P:translation"/>
    <property type="evidence" value="ECO:0007669"/>
    <property type="project" value="UniProtKB-UniRule"/>
</dbReference>
<dbReference type="FunFam" id="1.10.8.50:FF:000001">
    <property type="entry name" value="30S ribosomal protein S13"/>
    <property type="match status" value="1"/>
</dbReference>
<dbReference type="FunFam" id="4.10.910.10:FF:000001">
    <property type="entry name" value="30S ribosomal protein S13"/>
    <property type="match status" value="1"/>
</dbReference>
<dbReference type="Gene3D" id="1.10.8.50">
    <property type="match status" value="1"/>
</dbReference>
<dbReference type="Gene3D" id="4.10.910.10">
    <property type="entry name" value="30s ribosomal protein s13, domain 2"/>
    <property type="match status" value="1"/>
</dbReference>
<dbReference type="HAMAP" id="MF_01315">
    <property type="entry name" value="Ribosomal_uS13"/>
    <property type="match status" value="1"/>
</dbReference>
<dbReference type="InterPro" id="IPR027437">
    <property type="entry name" value="Rbsml_uS13_C"/>
</dbReference>
<dbReference type="InterPro" id="IPR001892">
    <property type="entry name" value="Ribosomal_uS13"/>
</dbReference>
<dbReference type="InterPro" id="IPR010979">
    <property type="entry name" value="Ribosomal_uS13-like_H2TH"/>
</dbReference>
<dbReference type="InterPro" id="IPR019980">
    <property type="entry name" value="Ribosomal_uS13_bac-type"/>
</dbReference>
<dbReference type="InterPro" id="IPR018269">
    <property type="entry name" value="Ribosomal_uS13_CS"/>
</dbReference>
<dbReference type="NCBIfam" id="TIGR03631">
    <property type="entry name" value="uS13_bact"/>
    <property type="match status" value="1"/>
</dbReference>
<dbReference type="PANTHER" id="PTHR10871">
    <property type="entry name" value="30S RIBOSOMAL PROTEIN S13/40S RIBOSOMAL PROTEIN S18"/>
    <property type="match status" value="1"/>
</dbReference>
<dbReference type="PANTHER" id="PTHR10871:SF1">
    <property type="entry name" value="SMALL RIBOSOMAL SUBUNIT PROTEIN US13M"/>
    <property type="match status" value="1"/>
</dbReference>
<dbReference type="Pfam" id="PF00416">
    <property type="entry name" value="Ribosomal_S13"/>
    <property type="match status" value="1"/>
</dbReference>
<dbReference type="PIRSF" id="PIRSF002134">
    <property type="entry name" value="Ribosomal_S13"/>
    <property type="match status" value="1"/>
</dbReference>
<dbReference type="SUPFAM" id="SSF46946">
    <property type="entry name" value="S13-like H2TH domain"/>
    <property type="match status" value="1"/>
</dbReference>
<dbReference type="PROSITE" id="PS00646">
    <property type="entry name" value="RIBOSOMAL_S13_1"/>
    <property type="match status" value="1"/>
</dbReference>
<dbReference type="PROSITE" id="PS50159">
    <property type="entry name" value="RIBOSOMAL_S13_2"/>
    <property type="match status" value="1"/>
</dbReference>